<evidence type="ECO:0000255" key="1">
    <source>
        <dbReference type="PROSITE-ProRule" id="PRU00388"/>
    </source>
</evidence>
<evidence type="ECO:0000255" key="2">
    <source>
        <dbReference type="PROSITE-ProRule" id="PRU10133"/>
    </source>
</evidence>
<evidence type="ECO:0000256" key="3">
    <source>
        <dbReference type="SAM" id="MobiDB-lite"/>
    </source>
</evidence>
<name>UBC11_SCHPO</name>
<reference key="1">
    <citation type="journal article" date="1997" name="Mol. Cell. Biol.">
        <title>A ubiquitin-conjugating enzyme in fission yeast that is essential for the onset of anaphase in mitosis.</title>
        <authorList>
            <person name="Osaka F."/>
            <person name="Seino H."/>
            <person name="Seno T."/>
            <person name="Yamao F."/>
        </authorList>
    </citation>
    <scope>NUCLEOTIDE SEQUENCE [GENOMIC DNA]</scope>
    <source>
        <strain>972 / ATCC 24843</strain>
    </source>
</reference>
<reference key="2">
    <citation type="journal article" date="2002" name="Nature">
        <title>The genome sequence of Schizosaccharomyces pombe.</title>
        <authorList>
            <person name="Wood V."/>
            <person name="Gwilliam R."/>
            <person name="Rajandream M.A."/>
            <person name="Lyne M.H."/>
            <person name="Lyne R."/>
            <person name="Stewart A."/>
            <person name="Sgouros J.G."/>
            <person name="Peat N."/>
            <person name="Hayles J."/>
            <person name="Baker S.G."/>
            <person name="Basham D."/>
            <person name="Bowman S."/>
            <person name="Brooks K."/>
            <person name="Brown D."/>
            <person name="Brown S."/>
            <person name="Chillingworth T."/>
            <person name="Churcher C.M."/>
            <person name="Collins M."/>
            <person name="Connor R."/>
            <person name="Cronin A."/>
            <person name="Davis P."/>
            <person name="Feltwell T."/>
            <person name="Fraser A."/>
            <person name="Gentles S."/>
            <person name="Goble A."/>
            <person name="Hamlin N."/>
            <person name="Harris D.E."/>
            <person name="Hidalgo J."/>
            <person name="Hodgson G."/>
            <person name="Holroyd S."/>
            <person name="Hornsby T."/>
            <person name="Howarth S."/>
            <person name="Huckle E.J."/>
            <person name="Hunt S."/>
            <person name="Jagels K."/>
            <person name="James K.D."/>
            <person name="Jones L."/>
            <person name="Jones M."/>
            <person name="Leather S."/>
            <person name="McDonald S."/>
            <person name="McLean J."/>
            <person name="Mooney P."/>
            <person name="Moule S."/>
            <person name="Mungall K.L."/>
            <person name="Murphy L.D."/>
            <person name="Niblett D."/>
            <person name="Odell C."/>
            <person name="Oliver K."/>
            <person name="O'Neil S."/>
            <person name="Pearson D."/>
            <person name="Quail M.A."/>
            <person name="Rabbinowitsch E."/>
            <person name="Rutherford K.M."/>
            <person name="Rutter S."/>
            <person name="Saunders D."/>
            <person name="Seeger K."/>
            <person name="Sharp S."/>
            <person name="Skelton J."/>
            <person name="Simmonds M.N."/>
            <person name="Squares R."/>
            <person name="Squares S."/>
            <person name="Stevens K."/>
            <person name="Taylor K."/>
            <person name="Taylor R.G."/>
            <person name="Tivey A."/>
            <person name="Walsh S.V."/>
            <person name="Warren T."/>
            <person name="Whitehead S."/>
            <person name="Woodward J.R."/>
            <person name="Volckaert G."/>
            <person name="Aert R."/>
            <person name="Robben J."/>
            <person name="Grymonprez B."/>
            <person name="Weltjens I."/>
            <person name="Vanstreels E."/>
            <person name="Rieger M."/>
            <person name="Schaefer M."/>
            <person name="Mueller-Auer S."/>
            <person name="Gabel C."/>
            <person name="Fuchs M."/>
            <person name="Duesterhoeft A."/>
            <person name="Fritzc C."/>
            <person name="Holzer E."/>
            <person name="Moestl D."/>
            <person name="Hilbert H."/>
            <person name="Borzym K."/>
            <person name="Langer I."/>
            <person name="Beck A."/>
            <person name="Lehrach H."/>
            <person name="Reinhardt R."/>
            <person name="Pohl T.M."/>
            <person name="Eger P."/>
            <person name="Zimmermann W."/>
            <person name="Wedler H."/>
            <person name="Wambutt R."/>
            <person name="Purnelle B."/>
            <person name="Goffeau A."/>
            <person name="Cadieu E."/>
            <person name="Dreano S."/>
            <person name="Gloux S."/>
            <person name="Lelaure V."/>
            <person name="Mottier S."/>
            <person name="Galibert F."/>
            <person name="Aves S.J."/>
            <person name="Xiang Z."/>
            <person name="Hunt C."/>
            <person name="Moore K."/>
            <person name="Hurst S.M."/>
            <person name="Lucas M."/>
            <person name="Rochet M."/>
            <person name="Gaillardin C."/>
            <person name="Tallada V.A."/>
            <person name="Garzon A."/>
            <person name="Thode G."/>
            <person name="Daga R.R."/>
            <person name="Cruzado L."/>
            <person name="Jimenez J."/>
            <person name="Sanchez M."/>
            <person name="del Rey F."/>
            <person name="Benito J."/>
            <person name="Dominguez A."/>
            <person name="Revuelta J.L."/>
            <person name="Moreno S."/>
            <person name="Armstrong J."/>
            <person name="Forsburg S.L."/>
            <person name="Cerutti L."/>
            <person name="Lowe T."/>
            <person name="McCombie W.R."/>
            <person name="Paulsen I."/>
            <person name="Potashkin J."/>
            <person name="Shpakovski G.V."/>
            <person name="Ussery D."/>
            <person name="Barrell B.G."/>
            <person name="Nurse P."/>
        </authorList>
    </citation>
    <scope>NUCLEOTIDE SEQUENCE [LARGE SCALE GENOMIC DNA]</scope>
    <source>
        <strain>972 / ATCC 24843</strain>
    </source>
</reference>
<accession>O00103</accession>
<dbReference type="EC" id="2.3.2.23"/>
<dbReference type="EMBL" id="D85545">
    <property type="protein sequence ID" value="BAA20375.1"/>
    <property type="molecule type" value="Genomic_DNA"/>
</dbReference>
<dbReference type="EMBL" id="CU329672">
    <property type="protein sequence ID" value="CAB38416.1"/>
    <property type="molecule type" value="Genomic_DNA"/>
</dbReference>
<dbReference type="PIR" id="T40902">
    <property type="entry name" value="T40902"/>
</dbReference>
<dbReference type="RefSeq" id="NP_588069.1">
    <property type="nucleotide sequence ID" value="NM_001023061.2"/>
</dbReference>
<dbReference type="SMR" id="O00103"/>
<dbReference type="BioGRID" id="275761">
    <property type="interactions" value="9"/>
</dbReference>
<dbReference type="FunCoup" id="O00103">
    <property type="interactions" value="465"/>
</dbReference>
<dbReference type="STRING" id="284812.O00103"/>
<dbReference type="iPTMnet" id="O00103"/>
<dbReference type="PaxDb" id="4896-SPCC1259.15c.1"/>
<dbReference type="EnsemblFungi" id="SPCC1259.15c.1">
    <property type="protein sequence ID" value="SPCC1259.15c.1:pep"/>
    <property type="gene ID" value="SPCC1259.15c"/>
</dbReference>
<dbReference type="GeneID" id="2539190"/>
<dbReference type="KEGG" id="spo:2539190"/>
<dbReference type="PomBase" id="SPCC1259.15c">
    <property type="gene designation" value="ubc11"/>
</dbReference>
<dbReference type="VEuPathDB" id="FungiDB:SPCC1259.15c"/>
<dbReference type="eggNOG" id="KOG0421">
    <property type="taxonomic scope" value="Eukaryota"/>
</dbReference>
<dbReference type="HOGENOM" id="CLU_030988_9_1_1"/>
<dbReference type="InParanoid" id="O00103"/>
<dbReference type="OMA" id="PKDNHAV"/>
<dbReference type="PhylomeDB" id="O00103"/>
<dbReference type="BRENDA" id="2.3.2.23">
    <property type="organism ID" value="5613"/>
</dbReference>
<dbReference type="Reactome" id="R-SPO-8866652">
    <property type="pathway name" value="Synthesis of active ubiquitin: roles of E1 and E2 enzymes"/>
</dbReference>
<dbReference type="Reactome" id="R-SPO-983168">
    <property type="pathway name" value="Antigen processing: Ubiquitination &amp; Proteasome degradation"/>
</dbReference>
<dbReference type="UniPathway" id="UPA00143"/>
<dbReference type="PRO" id="PR:O00103"/>
<dbReference type="Proteomes" id="UP000002485">
    <property type="component" value="Chromosome III"/>
</dbReference>
<dbReference type="GO" id="GO:0005829">
    <property type="term" value="C:cytosol"/>
    <property type="evidence" value="ECO:0007005"/>
    <property type="project" value="PomBase"/>
</dbReference>
<dbReference type="GO" id="GO:0005634">
    <property type="term" value="C:nucleus"/>
    <property type="evidence" value="ECO:0007005"/>
    <property type="project" value="PomBase"/>
</dbReference>
<dbReference type="GO" id="GO:0005524">
    <property type="term" value="F:ATP binding"/>
    <property type="evidence" value="ECO:0007669"/>
    <property type="project" value="UniProtKB-KW"/>
</dbReference>
<dbReference type="GO" id="GO:0061631">
    <property type="term" value="F:ubiquitin conjugating enzyme activity"/>
    <property type="evidence" value="ECO:0000314"/>
    <property type="project" value="PomBase"/>
</dbReference>
<dbReference type="GO" id="GO:0031145">
    <property type="term" value="P:anaphase-promoting complex-dependent catabolic process"/>
    <property type="evidence" value="ECO:0000318"/>
    <property type="project" value="GO_Central"/>
</dbReference>
<dbReference type="GO" id="GO:0051301">
    <property type="term" value="P:cell division"/>
    <property type="evidence" value="ECO:0007669"/>
    <property type="project" value="UniProtKB-KW"/>
</dbReference>
<dbReference type="GO" id="GO:1902426">
    <property type="term" value="P:deactivation of mitotic spindle assembly checkpoint"/>
    <property type="evidence" value="ECO:0000315"/>
    <property type="project" value="PomBase"/>
</dbReference>
<dbReference type="GO" id="GO:0045842">
    <property type="term" value="P:positive regulation of mitotic metaphase/anaphase transition"/>
    <property type="evidence" value="ECO:0000315"/>
    <property type="project" value="PomBase"/>
</dbReference>
<dbReference type="GO" id="GO:0000209">
    <property type="term" value="P:protein polyubiquitination"/>
    <property type="evidence" value="ECO:0000318"/>
    <property type="project" value="GO_Central"/>
</dbReference>
<dbReference type="GO" id="GO:0030071">
    <property type="term" value="P:regulation of mitotic metaphase/anaphase transition"/>
    <property type="evidence" value="ECO:0000318"/>
    <property type="project" value="GO_Central"/>
</dbReference>
<dbReference type="GO" id="GO:0006511">
    <property type="term" value="P:ubiquitin-dependent protein catabolic process"/>
    <property type="evidence" value="ECO:0000315"/>
    <property type="project" value="PomBase"/>
</dbReference>
<dbReference type="CDD" id="cd23791">
    <property type="entry name" value="UBCc_UBE2C"/>
    <property type="match status" value="1"/>
</dbReference>
<dbReference type="FunFam" id="3.10.110.10:FF:000068">
    <property type="entry name" value="Ubiquitin-conjugating enzyme E2-20 kDa"/>
    <property type="match status" value="1"/>
</dbReference>
<dbReference type="Gene3D" id="3.10.110.10">
    <property type="entry name" value="Ubiquitin Conjugating Enzyme"/>
    <property type="match status" value="1"/>
</dbReference>
<dbReference type="InterPro" id="IPR050113">
    <property type="entry name" value="Ub_conjugating_enzyme"/>
</dbReference>
<dbReference type="InterPro" id="IPR000608">
    <property type="entry name" value="UBQ-conjugat_E2_core"/>
</dbReference>
<dbReference type="InterPro" id="IPR023313">
    <property type="entry name" value="UBQ-conjugating_AS"/>
</dbReference>
<dbReference type="InterPro" id="IPR016135">
    <property type="entry name" value="UBQ-conjugating_enzyme/RWD"/>
</dbReference>
<dbReference type="PANTHER" id="PTHR24067">
    <property type="entry name" value="UBIQUITIN-CONJUGATING ENZYME E2"/>
    <property type="match status" value="1"/>
</dbReference>
<dbReference type="Pfam" id="PF00179">
    <property type="entry name" value="UQ_con"/>
    <property type="match status" value="1"/>
</dbReference>
<dbReference type="SMART" id="SM00212">
    <property type="entry name" value="UBCc"/>
    <property type="match status" value="1"/>
</dbReference>
<dbReference type="SUPFAM" id="SSF54495">
    <property type="entry name" value="UBC-like"/>
    <property type="match status" value="1"/>
</dbReference>
<dbReference type="PROSITE" id="PS00183">
    <property type="entry name" value="UBC_1"/>
    <property type="match status" value="1"/>
</dbReference>
<dbReference type="PROSITE" id="PS50127">
    <property type="entry name" value="UBC_2"/>
    <property type="match status" value="1"/>
</dbReference>
<proteinExistence type="inferred from homology"/>
<keyword id="KW-0067">ATP-binding</keyword>
<keyword id="KW-0131">Cell cycle</keyword>
<keyword id="KW-0132">Cell division</keyword>
<keyword id="KW-0498">Mitosis</keyword>
<keyword id="KW-0547">Nucleotide-binding</keyword>
<keyword id="KW-1185">Reference proteome</keyword>
<keyword id="KW-0808">Transferase</keyword>
<keyword id="KW-0833">Ubl conjugation pathway</keyword>
<feature type="chain" id="PRO_0000082566" description="Ubiquitin-conjugating enzyme E2-20 kDa">
    <location>
        <begin position="1"/>
        <end position="176"/>
    </location>
</feature>
<feature type="domain" description="UBC core" evidence="1">
    <location>
        <begin position="28"/>
        <end position="175"/>
    </location>
</feature>
<feature type="region of interest" description="Disordered" evidence="3">
    <location>
        <begin position="1"/>
        <end position="25"/>
    </location>
</feature>
<feature type="compositionally biased region" description="Polar residues" evidence="3">
    <location>
        <begin position="1"/>
        <end position="20"/>
    </location>
</feature>
<feature type="active site" description="Glycyl thioester intermediate" evidence="1 2">
    <location>
        <position position="113"/>
    </location>
</feature>
<comment type="function">
    <text>Catalyzes the covalent attachment of ubiquitin to other proteins.</text>
</comment>
<comment type="catalytic activity">
    <reaction evidence="1 2">
        <text>S-ubiquitinyl-[E1 ubiquitin-activating enzyme]-L-cysteine + [E2 ubiquitin-conjugating enzyme]-L-cysteine = [E1 ubiquitin-activating enzyme]-L-cysteine + S-ubiquitinyl-[E2 ubiquitin-conjugating enzyme]-L-cysteine.</text>
        <dbReference type="EC" id="2.3.2.23"/>
    </reaction>
</comment>
<comment type="pathway">
    <text evidence="1">Protein modification; protein ubiquitination.</text>
</comment>
<comment type="similarity">
    <text evidence="1">Belongs to the ubiquitin-conjugating enzyme family.</text>
</comment>
<gene>
    <name type="primary">ubc11</name>
    <name type="synonym">ubcp4</name>
    <name type="ORF">SPCC1259.15c</name>
</gene>
<organism>
    <name type="scientific">Schizosaccharomyces pombe (strain 972 / ATCC 24843)</name>
    <name type="common">Fission yeast</name>
    <dbReference type="NCBI Taxonomy" id="284812"/>
    <lineage>
        <taxon>Eukaryota</taxon>
        <taxon>Fungi</taxon>
        <taxon>Dikarya</taxon>
        <taxon>Ascomycota</taxon>
        <taxon>Taphrinomycotina</taxon>
        <taxon>Schizosaccharomycetes</taxon>
        <taxon>Schizosaccharomycetales</taxon>
        <taxon>Schizosaccharomycetaceae</taxon>
        <taxon>Schizosaccharomyces</taxon>
    </lineage>
</organism>
<sequence length="176" mass="19664">MDSDMQNQNPHTNSKNSSSAGMAVDGHSVTKRLRSELMSLMMSNTPGISAFPDSDSNLLHWAGTITGPSDTYYEGLKFKISMSFPANYPYSPPTIIFTSPMWHPNVDMSGNICLDILKDKWSAVYNVQTILLSLQSLLGEPNNASPLNAQAAELWSKDPIEYKRLLMQRYKEIDEI</sequence>
<protein>
    <recommendedName>
        <fullName>Ubiquitin-conjugating enzyme E2-20 kDa</fullName>
        <ecNumber>2.3.2.23</ecNumber>
    </recommendedName>
    <alternativeName>
        <fullName>E2 ubiquitin-conjugating enzyme 11</fullName>
    </alternativeName>
    <alternativeName>
        <fullName>Ubiquitin carrier protein</fullName>
    </alternativeName>
    <alternativeName>
        <fullName>Ubiquitin-protein ligase</fullName>
    </alternativeName>
</protein>